<comment type="function">
    <text evidence="1">Cell wall formation. Catalyzes the addition of glutamate to the nucleotide precursor UDP-N-acetylmuramoyl-L-alanine (UMA).</text>
</comment>
<comment type="catalytic activity">
    <reaction evidence="1">
        <text>UDP-N-acetyl-alpha-D-muramoyl-L-alanine + D-glutamate + ATP = UDP-N-acetyl-alpha-D-muramoyl-L-alanyl-D-glutamate + ADP + phosphate + H(+)</text>
        <dbReference type="Rhea" id="RHEA:16429"/>
        <dbReference type="ChEBI" id="CHEBI:15378"/>
        <dbReference type="ChEBI" id="CHEBI:29986"/>
        <dbReference type="ChEBI" id="CHEBI:30616"/>
        <dbReference type="ChEBI" id="CHEBI:43474"/>
        <dbReference type="ChEBI" id="CHEBI:83898"/>
        <dbReference type="ChEBI" id="CHEBI:83900"/>
        <dbReference type="ChEBI" id="CHEBI:456216"/>
        <dbReference type="EC" id="6.3.2.9"/>
    </reaction>
</comment>
<comment type="pathway">
    <text evidence="1">Cell wall biogenesis; peptidoglycan biosynthesis.</text>
</comment>
<comment type="subcellular location">
    <subcellularLocation>
        <location evidence="1">Cytoplasm</location>
    </subcellularLocation>
</comment>
<comment type="similarity">
    <text evidence="1">Belongs to the MurCDEF family.</text>
</comment>
<organism>
    <name type="scientific">Natranaerobius thermophilus (strain ATCC BAA-1301 / DSM 18059 / JW/NM-WN-LF)</name>
    <dbReference type="NCBI Taxonomy" id="457570"/>
    <lineage>
        <taxon>Bacteria</taxon>
        <taxon>Bacillati</taxon>
        <taxon>Bacillota</taxon>
        <taxon>Clostridia</taxon>
        <taxon>Natranaerobiales</taxon>
        <taxon>Natranaerobiaceae</taxon>
        <taxon>Natranaerobius</taxon>
    </lineage>
</organism>
<evidence type="ECO:0000255" key="1">
    <source>
        <dbReference type="HAMAP-Rule" id="MF_00639"/>
    </source>
</evidence>
<name>MURD_NATTJ</name>
<sequence>MFDDKGKYLILGLGKSGQGAVIGLSNFEDCQVAVTDRKNLDDIRDAAAILEEHNVPYLNERESVERLSEFDILVKSPGIPMDNNIITKAKELGMPVIDELELGYQILNYRLTKPEERLIAVTGTNGKTTTTNLIGEFFEASGYSIYVAGNVGLPLSQIACEVTDTDFIVLEVSSFQLEFIKGFRPKVSMILNITPDHLDWHGDLDSYIRAKMNIFKNQTSKDFSVVNVDDETTFGLNRESKGRKLNFSKNSLRTEGSFIEDDHLVINYLDTKTSIIHKHDILLPGEHNLENVLAATTATLPFSISEENIRNTLKAFSGVDHRLELVRELNGVKFINDSKGTNVEASLKAINSFDSMILIAGGKDKGADFSEFAEAIKEKGVKKVYLFGETYKKIASALDKVYYPEYYIVNNLETAVTGAYQDAISGDVVLLSPACASWDMYDSFEKRGNHFKSIVYSLGGE</sequence>
<protein>
    <recommendedName>
        <fullName evidence="1">UDP-N-acetylmuramoylalanine--D-glutamate ligase</fullName>
        <ecNumber evidence="1">6.3.2.9</ecNumber>
    </recommendedName>
    <alternativeName>
        <fullName evidence="1">D-glutamic acid-adding enzyme</fullName>
    </alternativeName>
    <alternativeName>
        <fullName evidence="1">UDP-N-acetylmuramoyl-L-alanyl-D-glutamate synthetase</fullName>
    </alternativeName>
</protein>
<reference key="1">
    <citation type="submission" date="2008-04" db="EMBL/GenBank/DDBJ databases">
        <title>Complete sequence of chromosome of Natranaerobius thermophilus JW/NM-WN-LF.</title>
        <authorList>
            <consortium name="US DOE Joint Genome Institute"/>
            <person name="Copeland A."/>
            <person name="Lucas S."/>
            <person name="Lapidus A."/>
            <person name="Glavina del Rio T."/>
            <person name="Dalin E."/>
            <person name="Tice H."/>
            <person name="Bruce D."/>
            <person name="Goodwin L."/>
            <person name="Pitluck S."/>
            <person name="Chertkov O."/>
            <person name="Brettin T."/>
            <person name="Detter J.C."/>
            <person name="Han C."/>
            <person name="Kuske C.R."/>
            <person name="Schmutz J."/>
            <person name="Larimer F."/>
            <person name="Land M."/>
            <person name="Hauser L."/>
            <person name="Kyrpides N."/>
            <person name="Lykidis A."/>
            <person name="Mesbah N.M."/>
            <person name="Wiegel J."/>
        </authorList>
    </citation>
    <scope>NUCLEOTIDE SEQUENCE [LARGE SCALE GENOMIC DNA]</scope>
    <source>
        <strain>ATCC BAA-1301 / DSM 18059 / JW/NM-WN-LF</strain>
    </source>
</reference>
<proteinExistence type="inferred from homology"/>
<keyword id="KW-0067">ATP-binding</keyword>
<keyword id="KW-0131">Cell cycle</keyword>
<keyword id="KW-0132">Cell division</keyword>
<keyword id="KW-0133">Cell shape</keyword>
<keyword id="KW-0961">Cell wall biogenesis/degradation</keyword>
<keyword id="KW-0963">Cytoplasm</keyword>
<keyword id="KW-0436">Ligase</keyword>
<keyword id="KW-0547">Nucleotide-binding</keyword>
<keyword id="KW-0573">Peptidoglycan synthesis</keyword>
<keyword id="KW-1185">Reference proteome</keyword>
<feature type="chain" id="PRO_1000130865" description="UDP-N-acetylmuramoylalanine--D-glutamate ligase">
    <location>
        <begin position="1"/>
        <end position="461"/>
    </location>
</feature>
<feature type="binding site" evidence="1">
    <location>
        <begin position="123"/>
        <end position="129"/>
    </location>
    <ligand>
        <name>ATP</name>
        <dbReference type="ChEBI" id="CHEBI:30616"/>
    </ligand>
</feature>
<dbReference type="EC" id="6.3.2.9" evidence="1"/>
<dbReference type="EMBL" id="CP001034">
    <property type="protein sequence ID" value="ACB84885.1"/>
    <property type="molecule type" value="Genomic_DNA"/>
</dbReference>
<dbReference type="RefSeq" id="WP_012447760.1">
    <property type="nucleotide sequence ID" value="NC_010718.1"/>
</dbReference>
<dbReference type="SMR" id="B2A2H0"/>
<dbReference type="FunCoup" id="B2A2H0">
    <property type="interactions" value="387"/>
</dbReference>
<dbReference type="STRING" id="457570.Nther_1302"/>
<dbReference type="KEGG" id="nth:Nther_1302"/>
<dbReference type="eggNOG" id="COG0771">
    <property type="taxonomic scope" value="Bacteria"/>
</dbReference>
<dbReference type="HOGENOM" id="CLU_032540_0_0_9"/>
<dbReference type="InParanoid" id="B2A2H0"/>
<dbReference type="OrthoDB" id="9809796at2"/>
<dbReference type="UniPathway" id="UPA00219"/>
<dbReference type="Proteomes" id="UP000001683">
    <property type="component" value="Chromosome"/>
</dbReference>
<dbReference type="GO" id="GO:0005737">
    <property type="term" value="C:cytoplasm"/>
    <property type="evidence" value="ECO:0007669"/>
    <property type="project" value="UniProtKB-SubCell"/>
</dbReference>
<dbReference type="GO" id="GO:0005524">
    <property type="term" value="F:ATP binding"/>
    <property type="evidence" value="ECO:0007669"/>
    <property type="project" value="UniProtKB-UniRule"/>
</dbReference>
<dbReference type="GO" id="GO:0008764">
    <property type="term" value="F:UDP-N-acetylmuramoylalanine-D-glutamate ligase activity"/>
    <property type="evidence" value="ECO:0007669"/>
    <property type="project" value="UniProtKB-UniRule"/>
</dbReference>
<dbReference type="GO" id="GO:0051301">
    <property type="term" value="P:cell division"/>
    <property type="evidence" value="ECO:0007669"/>
    <property type="project" value="UniProtKB-KW"/>
</dbReference>
<dbReference type="GO" id="GO:0071555">
    <property type="term" value="P:cell wall organization"/>
    <property type="evidence" value="ECO:0007669"/>
    <property type="project" value="UniProtKB-KW"/>
</dbReference>
<dbReference type="GO" id="GO:0009252">
    <property type="term" value="P:peptidoglycan biosynthetic process"/>
    <property type="evidence" value="ECO:0007669"/>
    <property type="project" value="UniProtKB-UniRule"/>
</dbReference>
<dbReference type="GO" id="GO:0008360">
    <property type="term" value="P:regulation of cell shape"/>
    <property type="evidence" value="ECO:0007669"/>
    <property type="project" value="UniProtKB-KW"/>
</dbReference>
<dbReference type="Gene3D" id="3.90.190.20">
    <property type="entry name" value="Mur ligase, C-terminal domain"/>
    <property type="match status" value="1"/>
</dbReference>
<dbReference type="Gene3D" id="3.40.1190.10">
    <property type="entry name" value="Mur-like, catalytic domain"/>
    <property type="match status" value="1"/>
</dbReference>
<dbReference type="Gene3D" id="3.40.50.720">
    <property type="entry name" value="NAD(P)-binding Rossmann-like Domain"/>
    <property type="match status" value="1"/>
</dbReference>
<dbReference type="HAMAP" id="MF_00639">
    <property type="entry name" value="MurD"/>
    <property type="match status" value="1"/>
</dbReference>
<dbReference type="InterPro" id="IPR036565">
    <property type="entry name" value="Mur-like_cat_sf"/>
</dbReference>
<dbReference type="InterPro" id="IPR004101">
    <property type="entry name" value="Mur_ligase_C"/>
</dbReference>
<dbReference type="InterPro" id="IPR036615">
    <property type="entry name" value="Mur_ligase_C_dom_sf"/>
</dbReference>
<dbReference type="InterPro" id="IPR013221">
    <property type="entry name" value="Mur_ligase_cen"/>
</dbReference>
<dbReference type="InterPro" id="IPR005762">
    <property type="entry name" value="MurD"/>
</dbReference>
<dbReference type="NCBIfam" id="TIGR01087">
    <property type="entry name" value="murD"/>
    <property type="match status" value="1"/>
</dbReference>
<dbReference type="PANTHER" id="PTHR43692">
    <property type="entry name" value="UDP-N-ACETYLMURAMOYLALANINE--D-GLUTAMATE LIGASE"/>
    <property type="match status" value="1"/>
</dbReference>
<dbReference type="PANTHER" id="PTHR43692:SF1">
    <property type="entry name" value="UDP-N-ACETYLMURAMOYLALANINE--D-GLUTAMATE LIGASE"/>
    <property type="match status" value="1"/>
</dbReference>
<dbReference type="Pfam" id="PF02875">
    <property type="entry name" value="Mur_ligase_C"/>
    <property type="match status" value="1"/>
</dbReference>
<dbReference type="Pfam" id="PF08245">
    <property type="entry name" value="Mur_ligase_M"/>
    <property type="match status" value="1"/>
</dbReference>
<dbReference type="Pfam" id="PF21799">
    <property type="entry name" value="MurD-like_N"/>
    <property type="match status" value="1"/>
</dbReference>
<dbReference type="SUPFAM" id="SSF51984">
    <property type="entry name" value="MurCD N-terminal domain"/>
    <property type="match status" value="1"/>
</dbReference>
<dbReference type="SUPFAM" id="SSF53623">
    <property type="entry name" value="MurD-like peptide ligases, catalytic domain"/>
    <property type="match status" value="1"/>
</dbReference>
<dbReference type="SUPFAM" id="SSF53244">
    <property type="entry name" value="MurD-like peptide ligases, peptide-binding domain"/>
    <property type="match status" value="1"/>
</dbReference>
<gene>
    <name evidence="1" type="primary">murD</name>
    <name type="ordered locus">Nther_1302</name>
</gene>
<accession>B2A2H0</accession>